<evidence type="ECO:0000255" key="1"/>
<evidence type="ECO:0000255" key="2">
    <source>
        <dbReference type="HAMAP-Rule" id="MF_04131"/>
    </source>
</evidence>
<evidence type="ECO:0000305" key="3"/>
<comment type="function">
    <text evidence="2">Calcium-binding protein that interacts with rotavirus cell receptors once the initial attachment by VP4 has been achieved. Rotavirus attachment and entry into the host cell probably involves multiple sequential contacts between the outer capsid proteins VP4 and VP7, and the cell receptors. Following entry into the host cell, low intracellular or intravesicular Ca(2+) concentration probably causes the calcium-stabilized VP7 trimers to dissociate from the virion. This step is probably necessary for the membrane-disrupting entry step and the release of VP4, which is locked onto the virion by VP7.</text>
</comment>
<comment type="subunit">
    <text evidence="2">Homotrimer; disulfide-linked. 2 Ca(2+) ions bound at each subunit interface in the trimer hold the trimer together. Interacts with the intermediate capsid protein VP6. Interacts with the outer capsid protein VP5*.</text>
</comment>
<comment type="subcellular location">
    <subcellularLocation>
        <location evidence="2">Virion</location>
    </subcellularLocation>
    <subcellularLocation>
        <location evidence="2">Host endoplasmic reticulum lumen</location>
    </subcellularLocation>
    <text evidence="2">The outer layer contains 780 copies of VP7, grouped as 260 trimers. Immature double-layered particles assembled in the cytoplasm bud across the membrane of the endoplasmic reticulum, acquiring during this process a transient lipid membrane that is modified with the ER resident viral glycoproteins NSP4 and VP7; these enveloped particles also contain VP4. As the particles move towards the interior of the ER cisternae, the transient lipid membrane and the non-structural protein NSP4 are lost, while the virus surface proteins VP4 and VP7 rearrange to form the outermost virus protein layer, yielding mature infectious triple-layered particles.</text>
</comment>
<comment type="alternative products">
    <event type="alternative initiation"/>
    <isoform>
        <id>Q9E779-1</id>
        <name>1</name>
        <sequence type="displayed"/>
    </isoform>
    <isoform>
        <id>Q9E779-2</id>
        <name>2</name>
        <sequence type="described" ref="VSP_038579"/>
    </isoform>
</comment>
<comment type="PTM">
    <text evidence="2">N-glycosylated.</text>
</comment>
<comment type="PTM">
    <text evidence="2">The N-terminus is blocked possibly by pyroglutamic acid.</text>
</comment>
<comment type="miscellaneous">
    <text evidence="2">Some rotavirus strains are neuraminidase-sensitive and require sialic acid to attach to the cell surface. Some rotavirus strains are integrin-dependent. Some rotavirus strains depend on ganglioside for their entry into the host cell. Hsp70 also seems to be involved in the entry of some strains.</text>
</comment>
<comment type="miscellaneous">
    <text evidence="2">In group A rotaviruses, VP7 defines the G serotype.</text>
</comment>
<comment type="miscellaneous">
    <molecule>Isoform 2</molecule>
    <text evidence="3">Produced by alternative initiation at Met-30 of isoform 1.</text>
</comment>
<comment type="similarity">
    <text evidence="2">Belongs to the rotavirus VP7 family.</text>
</comment>
<accession>Q9E779</accession>
<reference key="1">
    <citation type="journal article" date="2000" name="Virology">
        <title>Sequence analysis of VP4 and VP7 genes of nontypeable strains identifies a new pair of outer capsid proteins representing novel P and G genotypes in bovine rotaviruses.</title>
        <authorList>
            <person name="Rao C.D."/>
            <person name="Gowda K."/>
            <person name="Reddy B.S."/>
        </authorList>
    </citation>
    <scope>NUCLEOTIDE SEQUENCE [MRNA]</scope>
</reference>
<dbReference type="EMBL" id="AF237666">
    <property type="protein sequence ID" value="AAG29807.1"/>
    <property type="molecule type" value="mRNA"/>
</dbReference>
<dbReference type="SMR" id="Q9E779"/>
<dbReference type="GO" id="GO:0044166">
    <property type="term" value="C:host cell endoplasmic reticulum lumen"/>
    <property type="evidence" value="ECO:0007669"/>
    <property type="project" value="UniProtKB-SubCell"/>
</dbReference>
<dbReference type="GO" id="GO:0039621">
    <property type="term" value="C:T=13 icosahedral viral capsid"/>
    <property type="evidence" value="ECO:0007669"/>
    <property type="project" value="UniProtKB-UniRule"/>
</dbReference>
<dbReference type="GO" id="GO:0039624">
    <property type="term" value="C:viral outer capsid"/>
    <property type="evidence" value="ECO:0007669"/>
    <property type="project" value="UniProtKB-UniRule"/>
</dbReference>
<dbReference type="GO" id="GO:0046872">
    <property type="term" value="F:metal ion binding"/>
    <property type="evidence" value="ECO:0007669"/>
    <property type="project" value="UniProtKB-KW"/>
</dbReference>
<dbReference type="Gene3D" id="3.40.50.11130">
    <property type="entry name" value="Glycoprotein VP7, domain 1"/>
    <property type="match status" value="1"/>
</dbReference>
<dbReference type="Gene3D" id="2.60.120.800">
    <property type="entry name" value="Rotavirus outer-layer protein VP7, domain 2"/>
    <property type="match status" value="1"/>
</dbReference>
<dbReference type="HAMAP" id="MF_04130">
    <property type="entry name" value="Rota_VP7"/>
    <property type="match status" value="1"/>
</dbReference>
<dbReference type="HAMAP" id="MF_04131">
    <property type="entry name" value="Rota_VP7_A"/>
    <property type="match status" value="1"/>
</dbReference>
<dbReference type="InterPro" id="IPR001963">
    <property type="entry name" value="VP7"/>
</dbReference>
<dbReference type="InterPro" id="IPR042207">
    <property type="entry name" value="VP7_1"/>
</dbReference>
<dbReference type="InterPro" id="IPR042210">
    <property type="entry name" value="VP7_2"/>
</dbReference>
<dbReference type="Pfam" id="PF00434">
    <property type="entry name" value="VP7"/>
    <property type="match status" value="1"/>
</dbReference>
<feature type="signal peptide" evidence="2">
    <location>
        <begin position="1"/>
        <end position="50"/>
    </location>
</feature>
<feature type="chain" id="PRO_0000369096" description="Outer capsid glycoprotein VP7" evidence="2">
    <location>
        <begin position="51"/>
        <end position="326"/>
    </location>
</feature>
<feature type="region of interest" description="CNP motif; interaction with ITGAV/ITGB3" evidence="2">
    <location>
        <begin position="165"/>
        <end position="167"/>
    </location>
</feature>
<feature type="region of interest" description="LVD motif; interaction with ITGA4/ITGB1 heterodimer" evidence="2">
    <location>
        <begin position="237"/>
        <end position="239"/>
    </location>
</feature>
<feature type="region of interest" description="GPR motif; interaction with ITGAX/ITGB2" evidence="2">
    <location>
        <begin position="253"/>
        <end position="255"/>
    </location>
</feature>
<feature type="binding site" evidence="2">
    <location>
        <position position="95"/>
    </location>
    <ligand>
        <name>Ca(2+)</name>
        <dbReference type="ChEBI" id="CHEBI:29108"/>
        <label>1</label>
    </ligand>
</feature>
<feature type="binding site" evidence="2">
    <location>
        <position position="177"/>
    </location>
    <ligand>
        <name>Ca(2+)</name>
        <dbReference type="ChEBI" id="CHEBI:29108"/>
        <label>2</label>
    </ligand>
</feature>
<feature type="binding site" evidence="2">
    <location>
        <position position="206"/>
    </location>
    <ligand>
        <name>Ca(2+)</name>
        <dbReference type="ChEBI" id="CHEBI:29108"/>
        <label>1</label>
    </ligand>
</feature>
<feature type="binding site" evidence="2">
    <location>
        <position position="214"/>
    </location>
    <ligand>
        <name>Ca(2+)</name>
        <dbReference type="ChEBI" id="CHEBI:29108"/>
        <label>1</label>
    </ligand>
</feature>
<feature type="binding site" evidence="2">
    <location>
        <position position="216"/>
    </location>
    <ligand>
        <name>Ca(2+)</name>
        <dbReference type="ChEBI" id="CHEBI:29108"/>
        <label>1</label>
    </ligand>
</feature>
<feature type="binding site" evidence="2">
    <location>
        <position position="228"/>
    </location>
    <ligand>
        <name>Ca(2+)</name>
        <dbReference type="ChEBI" id="CHEBI:29108"/>
        <label>2</label>
    </ligand>
</feature>
<feature type="binding site" evidence="2">
    <location>
        <position position="229"/>
    </location>
    <ligand>
        <name>Ca(2+)</name>
        <dbReference type="ChEBI" id="CHEBI:29108"/>
        <label>2</label>
    </ligand>
</feature>
<feature type="binding site" evidence="2">
    <location>
        <position position="231"/>
    </location>
    <ligand>
        <name>Ca(2+)</name>
        <dbReference type="ChEBI" id="CHEBI:29108"/>
        <label>2</label>
    </ligand>
</feature>
<feature type="binding site" evidence="2">
    <location>
        <position position="301"/>
    </location>
    <ligand>
        <name>Ca(2+)</name>
        <dbReference type="ChEBI" id="CHEBI:29108"/>
        <label>2</label>
    </ligand>
</feature>
<feature type="glycosylation site" description="N-linked (GlcNAc...) asparagine; by host" evidence="1">
    <location>
        <position position="69"/>
    </location>
</feature>
<feature type="glycosylation site" description="N-linked (GlcNAc...) asparagine; by host" evidence="1">
    <location>
        <position position="241"/>
    </location>
</feature>
<feature type="disulfide bond" evidence="2">
    <location>
        <begin position="82"/>
        <end position="135"/>
    </location>
</feature>
<feature type="disulfide bond" evidence="2">
    <location>
        <begin position="165"/>
        <end position="249"/>
    </location>
</feature>
<feature type="disulfide bond" evidence="2">
    <location>
        <begin position="191"/>
        <end position="244"/>
    </location>
</feature>
<feature type="disulfide bond" evidence="2">
    <location>
        <begin position="196"/>
        <end position="207"/>
    </location>
</feature>
<feature type="splice variant" id="VSP_038579" description="In isoform 2." evidence="3">
    <location>
        <begin position="1"/>
        <end position="29"/>
    </location>
</feature>
<protein>
    <recommendedName>
        <fullName evidence="2">Outer capsid glycoprotein VP7</fullName>
    </recommendedName>
</protein>
<keyword id="KW-0024">Alternative initiation</keyword>
<keyword id="KW-0106">Calcium</keyword>
<keyword id="KW-0167">Capsid protein</keyword>
<keyword id="KW-1015">Disulfide bond</keyword>
<keyword id="KW-0325">Glycoprotein</keyword>
<keyword id="KW-1038">Host endoplasmic reticulum</keyword>
<keyword id="KW-0945">Host-virus interaction</keyword>
<keyword id="KW-0479">Metal-binding</keyword>
<keyword id="KW-1152">Outer capsid protein</keyword>
<keyword id="KW-0732">Signal</keyword>
<keyword id="KW-1146">T=13 icosahedral capsid protein</keyword>
<keyword id="KW-0946">Virion</keyword>
<organism>
    <name type="scientific">Rotavirus A (isolate RVA/Cow/India/Hg18/2000/G15P[21])</name>
    <name type="common">RV-A</name>
    <dbReference type="NCBI Taxonomy" id="141270"/>
    <lineage>
        <taxon>Viruses</taxon>
        <taxon>Riboviria</taxon>
        <taxon>Orthornavirae</taxon>
        <taxon>Duplornaviricota</taxon>
        <taxon>Resentoviricetes</taxon>
        <taxon>Reovirales</taxon>
        <taxon>Sedoreoviridae</taxon>
        <taxon>Rotavirus</taxon>
        <taxon>Rotavirus A</taxon>
    </lineage>
</organism>
<proteinExistence type="evidence at transcript level"/>
<organismHost>
    <name type="scientific">Bos taurus</name>
    <name type="common">Bovine</name>
    <dbReference type="NCBI Taxonomy" id="9913"/>
</organismHost>
<sequence>MYGIEYTTILNSLILVVLLNYILKSVTRVMDYIIYRFLFVIVIVSLCAKAQNYGINLPITGSMDGAYTNTTDDKPFLTSTLCIYYPTIASNDLADPDWKNTVSQLFLTKGWPMGSVYFNEYVNIAEFSINPQLFCDYNIVLMKYESDLEMDMSELADLLLNEWLCNPMDVTLYYYQQTDEANKWISMGTSCTIKVCPLNTQTLGIGCLTTDTSSFETVAVNEKLVITDVVDGVSHKLDVTNVTCTIRNCKKLGPRENVAVVQIGGANILDITADPTTAPQTERMMRVNWKKWWQVFYTIVDYINQIVKVMSKRSRSLNSAAFYYRV</sequence>
<name>VP7_ROT18</name>